<protein>
    <recommendedName>
        <fullName>Uncharacterized protein in flaB3 3'region</fullName>
    </recommendedName>
</protein>
<accession>P42017</accession>
<proteinExistence type="predicted"/>
<feature type="chain" id="PRO_0000066213" description="Uncharacterized protein in flaB3 3'region">
    <location>
        <begin position="1"/>
        <end position="21" status="greater than"/>
    </location>
</feature>
<feature type="non-terminal residue">
    <location>
        <position position="21"/>
    </location>
</feature>
<organism>
    <name type="scientific">Methanococcus voltae</name>
    <dbReference type="NCBI Taxonomy" id="2188"/>
    <lineage>
        <taxon>Archaea</taxon>
        <taxon>Methanobacteriati</taxon>
        <taxon>Methanobacteriota</taxon>
        <taxon>Methanomada group</taxon>
        <taxon>Methanococci</taxon>
        <taxon>Methanococcales</taxon>
        <taxon>Methanococcaceae</taxon>
        <taxon>Methanococcus</taxon>
    </lineage>
</organism>
<reference key="1">
    <citation type="journal article" date="1991" name="J. Bacteriol.">
        <title>Cloning and sequencing of a multigene family encoding the flagellins of Methanococcus voltae.</title>
        <authorList>
            <person name="Kalmokoff M.L."/>
            <person name="Jarrell K.F."/>
        </authorList>
    </citation>
    <scope>NUCLEOTIDE SEQUENCE [GENOMIC DNA]</scope>
    <source>
        <strain>ATCC 33273 / DSM 1537 / NBRC 100457 / OCM 70 / PS</strain>
    </source>
</reference>
<dbReference type="EMBL" id="M72148">
    <property type="status" value="NOT_ANNOTATED_CDS"/>
    <property type="molecule type" value="Genomic_DNA"/>
</dbReference>
<dbReference type="PIR" id="E41316">
    <property type="entry name" value="E41316"/>
</dbReference>
<sequence>MPNISEIIDSINRRSMAEIIT</sequence>
<name>YFLA_METVO</name>